<proteinExistence type="inferred from homology"/>
<name>GATE_SACI4</name>
<accession>C3MYR6</accession>
<reference key="1">
    <citation type="journal article" date="2009" name="Proc. Natl. Acad. Sci. U.S.A.">
        <title>Biogeography of the Sulfolobus islandicus pan-genome.</title>
        <authorList>
            <person name="Reno M.L."/>
            <person name="Held N.L."/>
            <person name="Fields C.J."/>
            <person name="Burke P.V."/>
            <person name="Whitaker R.J."/>
        </authorList>
    </citation>
    <scope>NUCLEOTIDE SEQUENCE [LARGE SCALE GENOMIC DNA]</scope>
    <source>
        <strain>M.14.25 / Kamchatka #1</strain>
    </source>
</reference>
<dbReference type="EC" id="6.3.5.-" evidence="1"/>
<dbReference type="EMBL" id="CP001400">
    <property type="protein sequence ID" value="ACP38045.1"/>
    <property type="molecule type" value="Genomic_DNA"/>
</dbReference>
<dbReference type="RefSeq" id="WP_012711296.1">
    <property type="nucleotide sequence ID" value="NC_012588.1"/>
</dbReference>
<dbReference type="SMR" id="C3MYR6"/>
<dbReference type="GeneID" id="7941021"/>
<dbReference type="KEGG" id="sia:M1425_1290"/>
<dbReference type="HOGENOM" id="CLU_030702_0_0_2"/>
<dbReference type="Proteomes" id="UP000001350">
    <property type="component" value="Chromosome"/>
</dbReference>
<dbReference type="GO" id="GO:0005737">
    <property type="term" value="C:cytoplasm"/>
    <property type="evidence" value="ECO:0007669"/>
    <property type="project" value="InterPro"/>
</dbReference>
<dbReference type="GO" id="GO:0004812">
    <property type="term" value="F:aminoacyl-tRNA ligase activity"/>
    <property type="evidence" value="ECO:0007669"/>
    <property type="project" value="InterPro"/>
</dbReference>
<dbReference type="GO" id="GO:0005524">
    <property type="term" value="F:ATP binding"/>
    <property type="evidence" value="ECO:0007669"/>
    <property type="project" value="UniProtKB-KW"/>
</dbReference>
<dbReference type="GO" id="GO:0050567">
    <property type="term" value="F:glutaminyl-tRNA synthase (glutamine-hydrolyzing) activity"/>
    <property type="evidence" value="ECO:0007669"/>
    <property type="project" value="UniProtKB-UniRule"/>
</dbReference>
<dbReference type="GO" id="GO:0070681">
    <property type="term" value="P:glutaminyl-tRNAGln biosynthesis via transamidation"/>
    <property type="evidence" value="ECO:0007669"/>
    <property type="project" value="TreeGrafter"/>
</dbReference>
<dbReference type="GO" id="GO:0006412">
    <property type="term" value="P:translation"/>
    <property type="evidence" value="ECO:0007669"/>
    <property type="project" value="UniProtKB-UniRule"/>
</dbReference>
<dbReference type="FunFam" id="1.10.150.380:FF:000002">
    <property type="entry name" value="Glutamyl-tRNA(Gln) amidotransferase subunit E"/>
    <property type="match status" value="1"/>
</dbReference>
<dbReference type="FunFam" id="3.30.1360.30:FF:000003">
    <property type="entry name" value="Glutamyl-tRNA(Gln) amidotransferase subunit E"/>
    <property type="match status" value="1"/>
</dbReference>
<dbReference type="Gene3D" id="1.10.10.410">
    <property type="match status" value="1"/>
</dbReference>
<dbReference type="Gene3D" id="3.30.1360.30">
    <property type="entry name" value="GAD-like domain"/>
    <property type="match status" value="1"/>
</dbReference>
<dbReference type="Gene3D" id="1.10.150.380">
    <property type="entry name" value="GatB domain, N-terminal subdomain"/>
    <property type="match status" value="1"/>
</dbReference>
<dbReference type="HAMAP" id="MF_00588">
    <property type="entry name" value="GatE"/>
    <property type="match status" value="1"/>
</dbReference>
<dbReference type="InterPro" id="IPR017959">
    <property type="entry name" value="Asn/Gln-tRNA_amidoTrfase_suB/E"/>
</dbReference>
<dbReference type="InterPro" id="IPR006075">
    <property type="entry name" value="Asn/Gln-tRNA_Trfase_suB/E_cat"/>
</dbReference>
<dbReference type="InterPro" id="IPR018027">
    <property type="entry name" value="Asn/Gln_amidotransferase"/>
</dbReference>
<dbReference type="InterPro" id="IPR003789">
    <property type="entry name" value="Asn/Gln_tRNA_amidoTrase-B-like"/>
</dbReference>
<dbReference type="InterPro" id="IPR004115">
    <property type="entry name" value="GAD-like_sf"/>
</dbReference>
<dbReference type="InterPro" id="IPR029351">
    <property type="entry name" value="GAD_dom"/>
</dbReference>
<dbReference type="InterPro" id="IPR042114">
    <property type="entry name" value="GatB_C_1"/>
</dbReference>
<dbReference type="InterPro" id="IPR023168">
    <property type="entry name" value="GatB_Yqey_C_2"/>
</dbReference>
<dbReference type="InterPro" id="IPR004414">
    <property type="entry name" value="GatE"/>
</dbReference>
<dbReference type="InterPro" id="IPR017958">
    <property type="entry name" value="Gln-tRNA_amidoTrfase_suB_CS"/>
</dbReference>
<dbReference type="InterPro" id="IPR014746">
    <property type="entry name" value="Gln_synth/guanido_kin_cat_dom"/>
</dbReference>
<dbReference type="NCBIfam" id="TIGR00134">
    <property type="entry name" value="gatE_arch"/>
    <property type="match status" value="1"/>
</dbReference>
<dbReference type="NCBIfam" id="NF003107">
    <property type="entry name" value="PRK04028.1"/>
    <property type="match status" value="1"/>
</dbReference>
<dbReference type="PANTHER" id="PTHR11659">
    <property type="entry name" value="GLUTAMYL-TRNA GLN AMIDOTRANSFERASE SUBUNIT B MITOCHONDRIAL AND PROKARYOTIC PET112-RELATED"/>
    <property type="match status" value="1"/>
</dbReference>
<dbReference type="PANTHER" id="PTHR11659:SF2">
    <property type="entry name" value="GLUTAMYL-TRNA(GLN) AMIDOTRANSFERASE SUBUNIT E"/>
    <property type="match status" value="1"/>
</dbReference>
<dbReference type="Pfam" id="PF02938">
    <property type="entry name" value="GAD"/>
    <property type="match status" value="1"/>
</dbReference>
<dbReference type="Pfam" id="PF02934">
    <property type="entry name" value="GatB_N"/>
    <property type="match status" value="1"/>
</dbReference>
<dbReference type="Pfam" id="PF02637">
    <property type="entry name" value="GatB_Yqey"/>
    <property type="match status" value="1"/>
</dbReference>
<dbReference type="SMART" id="SM00845">
    <property type="entry name" value="GatB_Yqey"/>
    <property type="match status" value="1"/>
</dbReference>
<dbReference type="SUPFAM" id="SSF55261">
    <property type="entry name" value="GAD domain-like"/>
    <property type="match status" value="1"/>
</dbReference>
<dbReference type="SUPFAM" id="SSF89095">
    <property type="entry name" value="GatB/YqeY motif"/>
    <property type="match status" value="1"/>
</dbReference>
<dbReference type="SUPFAM" id="SSF55931">
    <property type="entry name" value="Glutamine synthetase/guanido kinase"/>
    <property type="match status" value="1"/>
</dbReference>
<dbReference type="PROSITE" id="PS01234">
    <property type="entry name" value="GATB"/>
    <property type="match status" value="1"/>
</dbReference>
<keyword id="KW-0067">ATP-binding</keyword>
<keyword id="KW-0436">Ligase</keyword>
<keyword id="KW-0547">Nucleotide-binding</keyword>
<keyword id="KW-0648">Protein biosynthesis</keyword>
<gene>
    <name evidence="1" type="primary">gatE</name>
    <name type="ordered locus">M1425_1290</name>
</gene>
<comment type="function">
    <text evidence="1">Allows the formation of correctly charged Gln-tRNA(Gln) through the transamidation of misacylated Glu-tRNA(Gln) in organisms which lack glutaminyl-tRNA synthetase. The reaction takes place in the presence of glutamine and ATP through an activated gamma-phospho-Glu-tRNA(Gln). The GatDE system is specific for glutamate and does not act on aspartate.</text>
</comment>
<comment type="catalytic activity">
    <reaction evidence="1">
        <text>L-glutamyl-tRNA(Gln) + L-glutamine + ATP + H2O = L-glutaminyl-tRNA(Gln) + L-glutamate + ADP + phosphate + H(+)</text>
        <dbReference type="Rhea" id="RHEA:17521"/>
        <dbReference type="Rhea" id="RHEA-COMP:9681"/>
        <dbReference type="Rhea" id="RHEA-COMP:9684"/>
        <dbReference type="ChEBI" id="CHEBI:15377"/>
        <dbReference type="ChEBI" id="CHEBI:15378"/>
        <dbReference type="ChEBI" id="CHEBI:29985"/>
        <dbReference type="ChEBI" id="CHEBI:30616"/>
        <dbReference type="ChEBI" id="CHEBI:43474"/>
        <dbReference type="ChEBI" id="CHEBI:58359"/>
        <dbReference type="ChEBI" id="CHEBI:78520"/>
        <dbReference type="ChEBI" id="CHEBI:78521"/>
        <dbReference type="ChEBI" id="CHEBI:456216"/>
    </reaction>
</comment>
<comment type="subunit">
    <text evidence="1">Heterodimer of GatD and GatE.</text>
</comment>
<comment type="similarity">
    <text evidence="1">Belongs to the GatB/GatE family. GatE subfamily.</text>
</comment>
<organism>
    <name type="scientific">Saccharolobus islandicus (strain M.14.25 / Kamchatka #1)</name>
    <name type="common">Sulfolobus islandicus</name>
    <dbReference type="NCBI Taxonomy" id="427317"/>
    <lineage>
        <taxon>Archaea</taxon>
        <taxon>Thermoproteota</taxon>
        <taxon>Thermoprotei</taxon>
        <taxon>Sulfolobales</taxon>
        <taxon>Sulfolobaceae</taxon>
        <taxon>Saccharolobus</taxon>
    </lineage>
</organism>
<protein>
    <recommendedName>
        <fullName evidence="1">Glutamyl-tRNA(Gln) amidotransferase subunit E</fullName>
        <shortName evidence="1">Glu-ADT subunit E</shortName>
        <ecNumber evidence="1">6.3.5.-</ecNumber>
    </recommendedName>
</protein>
<evidence type="ECO:0000255" key="1">
    <source>
        <dbReference type="HAMAP-Rule" id="MF_00588"/>
    </source>
</evidence>
<sequence length="633" mass="71528">MSELNYEELGLKVGLEIHQQLNTSHKLFCNCSTNLKEDYKLTLERYLRPALSELGEVDVAALFEWKKGKKYVYRIPITTSCLVEADEEPPHAINEEALKIALAIAIALNSNIVDEIYVMRKIVIDGSNTTGFQRTAIVALGGMLKDEGVTIQTIAVEEDAARKIDERTDQVTYSLDRLGIPLIEISTGPDIRSPEQAERVALKIGQLLRMTGKVKRGIGTIRQDLNISIKGGTKIEIKGVQKLELIPDIVRYEAMRQFNLLKIKEELNKRGVSKNLILSNFVVKDLTELFKNTNSKIIKSGIEKGGLVYGIRAYKLKGILGWELIPKKRRFGTEIADYVRALAELGGLFHSDELPNYGITEEEINKVREALNATTEDGFILIVGERERLDKAVEVIRDRILLAFDGIPKETRGALDDGTTKFLRPQPSSARMYPETDIPPRRIDEKLLEDAKKFVPESPESKMKRYITLGLSEELAKEIIRDPRLDLFEELVNKYSPKVSPVVIASTITNTLKYVKSKGGDISKINEEDIEELIKSVYENKISKDSISEILLEYTTNKNVELKDVIRKYEALPTEELEKIIDDVISSNLDEIRKRKDKAVNLIMSKVMSKVKGRAEGKVILELIKSRLKNVME</sequence>
<feature type="chain" id="PRO_1000212159" description="Glutamyl-tRNA(Gln) amidotransferase subunit E">
    <location>
        <begin position="1"/>
        <end position="633"/>
    </location>
</feature>